<comment type="function">
    <text evidence="1">Catalyzes the transfer of the phosphoribosyl group of 5-phosphorylribose-1-pyrophosphate (PRPP) to anthranilate to yield N-(5'-phosphoribosyl)-anthranilate (PRA).</text>
</comment>
<comment type="catalytic activity">
    <reaction evidence="1">
        <text>N-(5-phospho-beta-D-ribosyl)anthranilate + diphosphate = 5-phospho-alpha-D-ribose 1-diphosphate + anthranilate</text>
        <dbReference type="Rhea" id="RHEA:11768"/>
        <dbReference type="ChEBI" id="CHEBI:16567"/>
        <dbReference type="ChEBI" id="CHEBI:18277"/>
        <dbReference type="ChEBI" id="CHEBI:33019"/>
        <dbReference type="ChEBI" id="CHEBI:58017"/>
        <dbReference type="EC" id="2.4.2.18"/>
    </reaction>
</comment>
<comment type="cofactor">
    <cofactor evidence="1">
        <name>Mg(2+)</name>
        <dbReference type="ChEBI" id="CHEBI:18420"/>
    </cofactor>
    <text evidence="1">Binds 2 magnesium ions per monomer.</text>
</comment>
<comment type="pathway">
    <text evidence="1">Amino-acid biosynthesis; L-tryptophan biosynthesis; L-tryptophan from chorismate: step 2/5.</text>
</comment>
<comment type="subunit">
    <text evidence="1">Homodimer.</text>
</comment>
<comment type="similarity">
    <text evidence="1">Belongs to the anthranilate phosphoribosyltransferase family.</text>
</comment>
<dbReference type="EC" id="2.4.2.18" evidence="1"/>
<dbReference type="EMBL" id="CP000826">
    <property type="protein sequence ID" value="ABV41770.1"/>
    <property type="molecule type" value="Genomic_DNA"/>
</dbReference>
<dbReference type="SMR" id="A8GF80"/>
<dbReference type="STRING" id="399741.Spro_2669"/>
<dbReference type="KEGG" id="spe:Spro_2669"/>
<dbReference type="eggNOG" id="COG0547">
    <property type="taxonomic scope" value="Bacteria"/>
</dbReference>
<dbReference type="HOGENOM" id="CLU_034315_2_1_6"/>
<dbReference type="OrthoDB" id="9806430at2"/>
<dbReference type="UniPathway" id="UPA00035">
    <property type="reaction ID" value="UER00041"/>
</dbReference>
<dbReference type="GO" id="GO:0005829">
    <property type="term" value="C:cytosol"/>
    <property type="evidence" value="ECO:0007669"/>
    <property type="project" value="TreeGrafter"/>
</dbReference>
<dbReference type="GO" id="GO:0004048">
    <property type="term" value="F:anthranilate phosphoribosyltransferase activity"/>
    <property type="evidence" value="ECO:0007669"/>
    <property type="project" value="UniProtKB-UniRule"/>
</dbReference>
<dbReference type="GO" id="GO:0000287">
    <property type="term" value="F:magnesium ion binding"/>
    <property type="evidence" value="ECO:0007669"/>
    <property type="project" value="UniProtKB-UniRule"/>
</dbReference>
<dbReference type="GO" id="GO:0000162">
    <property type="term" value="P:L-tryptophan biosynthetic process"/>
    <property type="evidence" value="ECO:0007669"/>
    <property type="project" value="UniProtKB-UniRule"/>
</dbReference>
<dbReference type="FunFam" id="1.20.970.10:FF:000003">
    <property type="entry name" value="Anthranilate phosphoribosyltransferase"/>
    <property type="match status" value="1"/>
</dbReference>
<dbReference type="FunFam" id="3.40.1030.10:FF:000002">
    <property type="entry name" value="Anthranilate phosphoribosyltransferase"/>
    <property type="match status" value="1"/>
</dbReference>
<dbReference type="Gene3D" id="3.40.1030.10">
    <property type="entry name" value="Nucleoside phosphorylase/phosphoribosyltransferase catalytic domain"/>
    <property type="match status" value="1"/>
</dbReference>
<dbReference type="Gene3D" id="1.20.970.10">
    <property type="entry name" value="Transferase, Pyrimidine Nucleoside Phosphorylase, Chain C"/>
    <property type="match status" value="1"/>
</dbReference>
<dbReference type="HAMAP" id="MF_00211">
    <property type="entry name" value="TrpD"/>
    <property type="match status" value="1"/>
</dbReference>
<dbReference type="InterPro" id="IPR005940">
    <property type="entry name" value="Anthranilate_Pribosyl_Tfrase"/>
</dbReference>
<dbReference type="InterPro" id="IPR000312">
    <property type="entry name" value="Glycosyl_Trfase_fam3"/>
</dbReference>
<dbReference type="InterPro" id="IPR017459">
    <property type="entry name" value="Glycosyl_Trfase_fam3_N_dom"/>
</dbReference>
<dbReference type="InterPro" id="IPR036320">
    <property type="entry name" value="Glycosyl_Trfase_fam3_N_dom_sf"/>
</dbReference>
<dbReference type="InterPro" id="IPR035902">
    <property type="entry name" value="Nuc_phospho_transferase"/>
</dbReference>
<dbReference type="NCBIfam" id="TIGR01245">
    <property type="entry name" value="trpD"/>
    <property type="match status" value="1"/>
</dbReference>
<dbReference type="PANTHER" id="PTHR43285">
    <property type="entry name" value="ANTHRANILATE PHOSPHORIBOSYLTRANSFERASE"/>
    <property type="match status" value="1"/>
</dbReference>
<dbReference type="PANTHER" id="PTHR43285:SF2">
    <property type="entry name" value="ANTHRANILATE PHOSPHORIBOSYLTRANSFERASE"/>
    <property type="match status" value="1"/>
</dbReference>
<dbReference type="Pfam" id="PF02885">
    <property type="entry name" value="Glycos_trans_3N"/>
    <property type="match status" value="1"/>
</dbReference>
<dbReference type="Pfam" id="PF00591">
    <property type="entry name" value="Glycos_transf_3"/>
    <property type="match status" value="1"/>
</dbReference>
<dbReference type="SUPFAM" id="SSF52418">
    <property type="entry name" value="Nucleoside phosphorylase/phosphoribosyltransferase catalytic domain"/>
    <property type="match status" value="1"/>
</dbReference>
<dbReference type="SUPFAM" id="SSF47648">
    <property type="entry name" value="Nucleoside phosphorylase/phosphoribosyltransferase N-terminal domain"/>
    <property type="match status" value="1"/>
</dbReference>
<sequence>MQTILEKLYRSESMNQQESQQLFSAIVRGELEPSQLAAALISMKIRGEHPEEIAGAAKALLADALPFPRPDYPFADIVGTGGDGTNSINISTASAFVAAACGAKVAKHGNRSVSSRSGSSDLLAAFGIRLDLPAEEARKALDELGVCFLFAPQYHTGFRHAMPVRQQLKTRTVFNVLGPLINPARPPLALIGVYSPELVLPIAETLRVLGYQRAAVVHGGGMDEVAIHATTHVAELNNGEIESYQLTPQSFGLQSYPLEALLGGSPEENRDILARLLQGKGDPAHAAAVAANVALLLKLFGHEDLRQNAQQALDMIHSGQAYERVTALAARG</sequence>
<name>TRPD_SERP5</name>
<gene>
    <name evidence="1" type="primary">trpD</name>
    <name type="ordered locus">Spro_2669</name>
</gene>
<organism>
    <name type="scientific">Serratia proteamaculans (strain 568)</name>
    <dbReference type="NCBI Taxonomy" id="399741"/>
    <lineage>
        <taxon>Bacteria</taxon>
        <taxon>Pseudomonadati</taxon>
        <taxon>Pseudomonadota</taxon>
        <taxon>Gammaproteobacteria</taxon>
        <taxon>Enterobacterales</taxon>
        <taxon>Yersiniaceae</taxon>
        <taxon>Serratia</taxon>
    </lineage>
</organism>
<accession>A8GF80</accession>
<keyword id="KW-0028">Amino-acid biosynthesis</keyword>
<keyword id="KW-0057">Aromatic amino acid biosynthesis</keyword>
<keyword id="KW-0328">Glycosyltransferase</keyword>
<keyword id="KW-0460">Magnesium</keyword>
<keyword id="KW-0479">Metal-binding</keyword>
<keyword id="KW-0808">Transferase</keyword>
<keyword id="KW-0822">Tryptophan biosynthesis</keyword>
<protein>
    <recommendedName>
        <fullName evidence="1">Anthranilate phosphoribosyltransferase</fullName>
        <ecNumber evidence="1">2.4.2.18</ecNumber>
    </recommendedName>
</protein>
<feature type="chain" id="PRO_1000058624" description="Anthranilate phosphoribosyltransferase">
    <location>
        <begin position="1"/>
        <end position="332"/>
    </location>
</feature>
<feature type="binding site" evidence="1">
    <location>
        <position position="79"/>
    </location>
    <ligand>
        <name>5-phospho-alpha-D-ribose 1-diphosphate</name>
        <dbReference type="ChEBI" id="CHEBI:58017"/>
    </ligand>
</feature>
<feature type="binding site" evidence="1">
    <location>
        <position position="79"/>
    </location>
    <ligand>
        <name>anthranilate</name>
        <dbReference type="ChEBI" id="CHEBI:16567"/>
        <label>1</label>
    </ligand>
</feature>
<feature type="binding site" evidence="1">
    <location>
        <begin position="82"/>
        <end position="83"/>
    </location>
    <ligand>
        <name>5-phospho-alpha-D-ribose 1-diphosphate</name>
        <dbReference type="ChEBI" id="CHEBI:58017"/>
    </ligand>
</feature>
<feature type="binding site" evidence="1">
    <location>
        <position position="87"/>
    </location>
    <ligand>
        <name>5-phospho-alpha-D-ribose 1-diphosphate</name>
        <dbReference type="ChEBI" id="CHEBI:58017"/>
    </ligand>
</feature>
<feature type="binding site" evidence="1">
    <location>
        <begin position="89"/>
        <end position="92"/>
    </location>
    <ligand>
        <name>5-phospho-alpha-D-ribose 1-diphosphate</name>
        <dbReference type="ChEBI" id="CHEBI:58017"/>
    </ligand>
</feature>
<feature type="binding site" evidence="1">
    <location>
        <position position="91"/>
    </location>
    <ligand>
        <name>Mg(2+)</name>
        <dbReference type="ChEBI" id="CHEBI:18420"/>
        <label>1</label>
    </ligand>
</feature>
<feature type="binding site" evidence="1">
    <location>
        <begin position="107"/>
        <end position="115"/>
    </location>
    <ligand>
        <name>5-phospho-alpha-D-ribose 1-diphosphate</name>
        <dbReference type="ChEBI" id="CHEBI:58017"/>
    </ligand>
</feature>
<feature type="binding site" evidence="1">
    <location>
        <position position="110"/>
    </location>
    <ligand>
        <name>anthranilate</name>
        <dbReference type="ChEBI" id="CHEBI:16567"/>
        <label>1</label>
    </ligand>
</feature>
<feature type="binding site" evidence="1">
    <location>
        <position position="119"/>
    </location>
    <ligand>
        <name>5-phospho-alpha-D-ribose 1-diphosphate</name>
        <dbReference type="ChEBI" id="CHEBI:58017"/>
    </ligand>
</feature>
<feature type="binding site" evidence="1">
    <location>
        <position position="165"/>
    </location>
    <ligand>
        <name>anthranilate</name>
        <dbReference type="ChEBI" id="CHEBI:16567"/>
        <label>2</label>
    </ligand>
</feature>
<feature type="binding site" evidence="1">
    <location>
        <position position="223"/>
    </location>
    <ligand>
        <name>Mg(2+)</name>
        <dbReference type="ChEBI" id="CHEBI:18420"/>
        <label>2</label>
    </ligand>
</feature>
<feature type="binding site" evidence="1">
    <location>
        <position position="224"/>
    </location>
    <ligand>
        <name>Mg(2+)</name>
        <dbReference type="ChEBI" id="CHEBI:18420"/>
        <label>1</label>
    </ligand>
</feature>
<feature type="binding site" evidence="1">
    <location>
        <position position="224"/>
    </location>
    <ligand>
        <name>Mg(2+)</name>
        <dbReference type="ChEBI" id="CHEBI:18420"/>
        <label>2</label>
    </ligand>
</feature>
<reference key="1">
    <citation type="submission" date="2007-09" db="EMBL/GenBank/DDBJ databases">
        <title>Complete sequence of chromosome of Serratia proteamaculans 568.</title>
        <authorList>
            <consortium name="US DOE Joint Genome Institute"/>
            <person name="Copeland A."/>
            <person name="Lucas S."/>
            <person name="Lapidus A."/>
            <person name="Barry K."/>
            <person name="Glavina del Rio T."/>
            <person name="Dalin E."/>
            <person name="Tice H."/>
            <person name="Pitluck S."/>
            <person name="Chain P."/>
            <person name="Malfatti S."/>
            <person name="Shin M."/>
            <person name="Vergez L."/>
            <person name="Schmutz J."/>
            <person name="Larimer F."/>
            <person name="Land M."/>
            <person name="Hauser L."/>
            <person name="Kyrpides N."/>
            <person name="Kim E."/>
            <person name="Taghavi S."/>
            <person name="Newman L."/>
            <person name="Vangronsveld J."/>
            <person name="van der Lelie D."/>
            <person name="Richardson P."/>
        </authorList>
    </citation>
    <scope>NUCLEOTIDE SEQUENCE [LARGE SCALE GENOMIC DNA]</scope>
    <source>
        <strain>568</strain>
    </source>
</reference>
<proteinExistence type="inferred from homology"/>
<evidence type="ECO:0000255" key="1">
    <source>
        <dbReference type="HAMAP-Rule" id="MF_00211"/>
    </source>
</evidence>